<organism>
    <name type="scientific">Rattus norvegicus</name>
    <name type="common">Rat</name>
    <dbReference type="NCBI Taxonomy" id="10116"/>
    <lineage>
        <taxon>Eukaryota</taxon>
        <taxon>Metazoa</taxon>
        <taxon>Chordata</taxon>
        <taxon>Craniata</taxon>
        <taxon>Vertebrata</taxon>
        <taxon>Euteleostomi</taxon>
        <taxon>Mammalia</taxon>
        <taxon>Eutheria</taxon>
        <taxon>Euarchontoglires</taxon>
        <taxon>Glires</taxon>
        <taxon>Rodentia</taxon>
        <taxon>Myomorpha</taxon>
        <taxon>Muroidea</taxon>
        <taxon>Muridae</taxon>
        <taxon>Murinae</taxon>
        <taxon>Rattus</taxon>
    </lineage>
</organism>
<sequence length="1202" mass="133290">MGNLKSVGQEPGPPCGLGLGLGLGLCGKQGPASPAPEPSQAPVPPSPTRPAPDHSPPLTRPPDGPKFPRVKNWEVGSITYDTLSAQAQQDGPCTPRRCLGSLVFPRKLQSRPTQGPSPTEQLLGQARDFINQYYNSIKRSGSQAHEQRLQEVEAEVVATGTYQLRESELVFGAKQAWRNAPRCVGRIQWGKLQVFDARDCRTAQEMFTYICNHIKYATNRGNLRSAITVFPQRYAGRGDFRIWNSQLVRYAGYRQQDGSVRGDPANVEITELCIQHGWTPGNGRFDVLPLLLQAPDEPPELFTLPPELVLEVPLEHPTLEWFAALGLRWYALPAVSNMLLEIGGLEFPAAPFSGWYMSSEIGMRDLCDPHRYNILEDVAVCMDLDTRTTSSLWKDKAAVEINVAVLYSYQLAKVTIVDHHAATASFMKHLENEQKARGGCPADWAWIVPPISGSLTPVFHQEMVNYFLSPAFRYQPDPWKGSAAKGTGITRKKTFKEVANAVKISASLMGTVMAKRVKATILYGSETGRAQSYAQQLGRLFRKAFDPRVLCMDEYDVVSLEHEALVLVVTSTFGNGDPPENGESFAAALMEMSGPYNSSPRPEQHKSYKIRFNSVSCSDPLVSSWRRKRKESSNTDSAGALGTLRFCVFGLGSRAYPHFCAFARAVDTRLEELGGERLLQLGQGDELCGQEEAFRGWAQAAFQAACETFCVGEDAKAAARDIFSPKRSWKRQRYRLSTQAESLQLLPRLTHVHRRKMFQATILSVENLQSSKSTRATILVRLDTGSQEGLQYQPGDHIGVCPPNRPGLVEALLSRVEDPPPSTEPVAVEQLEKGSPGGPPPGWVRDPRLPPCTLRQALTYFLDITSPPSPRLLRLLSTLAEESSEQQELEALSQDPRRYEEWKWFRCPTLLEVLEQFPSVALPAPLILTQLPLLQPRYYSVSSAPSAHPGEIHLTVAVLAYRTQDGLGPLHYGVCSTWMSQLKAGDPVPCFIRGAPSFRLPPDPNLPCILVGPGTGIAPFRGFWQDRLHDIEIKGLQPAPMTLVFGCRCSQLDHLYRDEVLDAQQRGVFGQVLTAFSRDPGSPKTYVQDLLRTELAAEVHRVLCLEQGHMFVCGDVTMATSVLQTVQRILATEGSMELDEAGDVIGVLRDQQRYHEDIFGLTLRTQEVTSRIRTQSFSLQERQLRGAVPWSFDPPTQETPGS</sequence>
<keyword id="KW-0106">Calcium</keyword>
<keyword id="KW-0112">Calmodulin-binding</keyword>
<keyword id="KW-1003">Cell membrane</keyword>
<keyword id="KW-0963">Cytoplasm</keyword>
<keyword id="KW-0206">Cytoskeleton</keyword>
<keyword id="KW-0274">FAD</keyword>
<keyword id="KW-0285">Flavoprotein</keyword>
<keyword id="KW-0288">FMN</keyword>
<keyword id="KW-0333">Golgi apparatus</keyword>
<keyword id="KW-0349">Heme</keyword>
<keyword id="KW-0408">Iron</keyword>
<keyword id="KW-0449">Lipoprotein</keyword>
<keyword id="KW-0472">Membrane</keyword>
<keyword id="KW-0479">Metal-binding</keyword>
<keyword id="KW-0519">Myristate</keyword>
<keyword id="KW-0521">NADP</keyword>
<keyword id="KW-0560">Oxidoreductase</keyword>
<keyword id="KW-0564">Palmitate</keyword>
<keyword id="KW-0597">Phosphoprotein</keyword>
<keyword id="KW-1185">Reference proteome</keyword>
<keyword id="KW-0862">Zinc</keyword>
<comment type="function">
    <text evidence="3">Produces nitric oxide (NO) which is implicated in vascular smooth muscle relaxation through a cGMP-mediated signal transduction pathway. NO mediates vascular endothelial growth factor (VEGF)-induced angiogenesis in coronary vessels and promotes blood clotting through the activation of platelets.</text>
</comment>
<comment type="catalytic activity">
    <reaction evidence="3">
        <text>2 L-arginine + 3 NADPH + 4 O2 + H(+) = 2 L-citrulline + 2 nitric oxide + 3 NADP(+) + 4 H2O</text>
        <dbReference type="Rhea" id="RHEA:19897"/>
        <dbReference type="ChEBI" id="CHEBI:15377"/>
        <dbReference type="ChEBI" id="CHEBI:15378"/>
        <dbReference type="ChEBI" id="CHEBI:15379"/>
        <dbReference type="ChEBI" id="CHEBI:16480"/>
        <dbReference type="ChEBI" id="CHEBI:32682"/>
        <dbReference type="ChEBI" id="CHEBI:57743"/>
        <dbReference type="ChEBI" id="CHEBI:57783"/>
        <dbReference type="ChEBI" id="CHEBI:58349"/>
        <dbReference type="EC" id="1.14.13.39"/>
    </reaction>
    <physiologicalReaction direction="left-to-right" evidence="3">
        <dbReference type="Rhea" id="RHEA:19898"/>
    </physiologicalReaction>
</comment>
<comment type="cofactor">
    <cofactor evidence="3">
        <name>heme b</name>
        <dbReference type="ChEBI" id="CHEBI:60344"/>
    </cofactor>
</comment>
<comment type="cofactor">
    <cofactor evidence="4">
        <name>FAD</name>
        <dbReference type="ChEBI" id="CHEBI:57692"/>
    </cofactor>
    <text evidence="4">Binds 1 FAD.</text>
</comment>
<comment type="cofactor">
    <cofactor evidence="5">
        <name>FMN</name>
        <dbReference type="ChEBI" id="CHEBI:58210"/>
    </cofactor>
    <text evidence="5">Binds 1 FMN.</text>
</comment>
<comment type="cofactor">
    <cofactor evidence="5">
        <name>(6R)-L-erythro-5,6,7,8-tetrahydrobiopterin</name>
        <dbReference type="ChEBI" id="CHEBI:59560"/>
    </cofactor>
    <text evidence="5">Tetrahydrobiopterin (BH4). May stabilize the dimeric form of the enzyme.</text>
</comment>
<comment type="activity regulation">
    <text evidence="1">Stimulated by calcium/calmodulin. Inhibited by NOSIP and NOSTRIN (By similarity).</text>
</comment>
<comment type="subunit">
    <text evidence="3 6">Homodimer. Interacts with NOSIP and NOSTRIN (By similarity). Interacts with HSP90AB1 (By similarity). Forms a complex with ASL, ASS1 and SLC7A1; the complex regulates cell-autonomous L-arginine synthesis and citrulline recycling while channeling extracellular L-arginine to nitric oxide synthesis pathway (By similarity).</text>
</comment>
<comment type="interaction">
    <interactant intactId="EBI-7052018">
        <id>Q62600</id>
    </interactant>
    <interactant intactId="EBI-397403">
        <id>P62157</id>
        <label>CALM</label>
    </interactant>
    <organismsDiffer>true</organismsDiffer>
    <experiments>2</experiments>
</comment>
<comment type="subcellular location">
    <subcellularLocation>
        <location evidence="1">Membrane</location>
        <location evidence="1">Caveola</location>
    </subcellularLocation>
    <subcellularLocation>
        <location evidence="1">Cytoplasm</location>
        <location evidence="1">Cytoskeleton</location>
    </subcellularLocation>
    <subcellularLocation>
        <location evidence="1">Golgi apparatus</location>
    </subcellularLocation>
    <subcellularLocation>
        <location evidence="1">Cell membrane</location>
    </subcellularLocation>
    <text evidence="1">Specifically associates with actin cytoskeleton in the G2 phase of the cell cycle, which is favored by interaction with NOSIP and results in a reduced enzymatic activity.</text>
</comment>
<comment type="tissue specificity">
    <text>Expressed constitutively by vascular endothelium. Detected in alveolar and serosal epithelial cells as well as in endothelial cells in one day old rat. In adult lung, detected in rare endothelial cells.</text>
</comment>
<comment type="developmental stage">
    <text>Detected at high levels in lung during the late fetal and postnatal period and at lower levels in adult.</text>
</comment>
<comment type="PTM">
    <text evidence="11">Phosphorylation by AMPK at Ser-1176 in the presence of Ca(2+)-calmodulin (CaM) activates activity. In absence of Ca(2+)-calmodulin, AMPK also phosphorylates Thr-494, resulting in inhibition of activity.</text>
</comment>
<comment type="similarity">
    <text evidence="12">Belongs to the NOS family.</text>
</comment>
<proteinExistence type="evidence at protein level"/>
<dbReference type="EC" id="1.14.13.39" evidence="3"/>
<dbReference type="EMBL" id="AB176831">
    <property type="protein sequence ID" value="BAD15356.1"/>
    <property type="molecule type" value="mRNA"/>
</dbReference>
<dbReference type="EMBL" id="AF085195">
    <property type="protein sequence ID" value="AAC34677.1"/>
    <property type="molecule type" value="mRNA"/>
</dbReference>
<dbReference type="EMBL" id="AY695391">
    <property type="protein sequence ID" value="AAT99567.1"/>
    <property type="molecule type" value="mRNA"/>
</dbReference>
<dbReference type="EMBL" id="AJ011115">
    <property type="protein sequence ID" value="CAA09493.1"/>
    <property type="molecule type" value="mRNA"/>
</dbReference>
<dbReference type="EMBL" id="AJ011116">
    <property type="protein sequence ID" value="CAA09494.1"/>
    <property type="molecule type" value="mRNA"/>
</dbReference>
<dbReference type="EMBL" id="U02534">
    <property type="protein sequence ID" value="AAA96141.1"/>
    <property type="molecule type" value="mRNA"/>
</dbReference>
<dbReference type="EMBL" id="AF093837">
    <property type="protein sequence ID" value="AAC64178.1"/>
    <property type="molecule type" value="mRNA"/>
</dbReference>
<dbReference type="EMBL" id="U18336">
    <property type="protein sequence ID" value="AAC52188.1"/>
    <property type="molecule type" value="mRNA"/>
</dbReference>
<dbReference type="PIR" id="I51917">
    <property type="entry name" value="I51917"/>
</dbReference>
<dbReference type="PIR" id="I56979">
    <property type="entry name" value="I56979"/>
</dbReference>
<dbReference type="RefSeq" id="NP_068610.1">
    <property type="nucleotide sequence ID" value="NM_021838.2"/>
</dbReference>
<dbReference type="BMRB" id="Q62600"/>
<dbReference type="SMR" id="Q62600"/>
<dbReference type="CORUM" id="Q62600"/>
<dbReference type="DIP" id="DIP-41833N"/>
<dbReference type="FunCoup" id="Q62600">
    <property type="interactions" value="461"/>
</dbReference>
<dbReference type="IntAct" id="Q62600">
    <property type="interactions" value="2"/>
</dbReference>
<dbReference type="MINT" id="Q62600"/>
<dbReference type="STRING" id="10116.ENSRNOP00000013058"/>
<dbReference type="BindingDB" id="Q62600"/>
<dbReference type="ChEMBL" id="CHEMBL1075230"/>
<dbReference type="GlyGen" id="Q62600">
    <property type="glycosylation" value="2 sites, 1 O-linked glycan (1 site)"/>
</dbReference>
<dbReference type="iPTMnet" id="Q62600"/>
<dbReference type="PhosphoSitePlus" id="Q62600"/>
<dbReference type="SwissPalm" id="Q62600"/>
<dbReference type="PaxDb" id="10116-ENSRNOP00000013058"/>
<dbReference type="GeneID" id="24600"/>
<dbReference type="KEGG" id="rno:24600"/>
<dbReference type="AGR" id="RGD:3186"/>
<dbReference type="CTD" id="4846"/>
<dbReference type="RGD" id="3186">
    <property type="gene designation" value="Nos3"/>
</dbReference>
<dbReference type="eggNOG" id="KOG1158">
    <property type="taxonomic scope" value="Eukaryota"/>
</dbReference>
<dbReference type="InParanoid" id="Q62600"/>
<dbReference type="OrthoDB" id="49862at9989"/>
<dbReference type="PhylomeDB" id="Q62600"/>
<dbReference type="BRENDA" id="1.14.13.39">
    <property type="organism ID" value="5301"/>
</dbReference>
<dbReference type="Reactome" id="R-RNO-1222556">
    <property type="pathway name" value="ROS and RNS production in phagocytes"/>
</dbReference>
<dbReference type="Reactome" id="R-RNO-1474151">
    <property type="pathway name" value="Tetrahydrobiopterin (BH4) synthesis, recycling, salvage and regulation"/>
</dbReference>
<dbReference type="Reactome" id="R-RNO-203615">
    <property type="pathway name" value="eNOS activation"/>
</dbReference>
<dbReference type="Reactome" id="R-RNO-203641">
    <property type="pathway name" value="NOSTRIN mediated eNOS trafficking"/>
</dbReference>
<dbReference type="Reactome" id="R-RNO-203754">
    <property type="pathway name" value="NOSIP mediated eNOS trafficking"/>
</dbReference>
<dbReference type="Reactome" id="R-RNO-392154">
    <property type="pathway name" value="Nitric oxide stimulates guanylate cyclase"/>
</dbReference>
<dbReference type="Reactome" id="R-RNO-5218920">
    <property type="pathway name" value="VEGFR2 mediated vascular permeability"/>
</dbReference>
<dbReference type="Reactome" id="R-RNO-9009391">
    <property type="pathway name" value="Extra-nuclear estrogen signaling"/>
</dbReference>
<dbReference type="Reactome" id="R-RNO-9856530">
    <property type="pathway name" value="High laminar flow shear stress activates signaling by PIEZO1 and PECAM1:CDH5:KDR in endothelial cells"/>
</dbReference>
<dbReference type="SABIO-RK" id="Q62600"/>
<dbReference type="PRO" id="PR:Q62600"/>
<dbReference type="Proteomes" id="UP000002494">
    <property type="component" value="Unplaced"/>
</dbReference>
<dbReference type="GO" id="GO:0045177">
    <property type="term" value="C:apical part of cell"/>
    <property type="evidence" value="ECO:0000314"/>
    <property type="project" value="RGD"/>
</dbReference>
<dbReference type="GO" id="GO:0005901">
    <property type="term" value="C:caveola"/>
    <property type="evidence" value="ECO:0000314"/>
    <property type="project" value="RGD"/>
</dbReference>
<dbReference type="GO" id="GO:0005737">
    <property type="term" value="C:cytoplasm"/>
    <property type="evidence" value="ECO:0000314"/>
    <property type="project" value="BHF-UCL"/>
</dbReference>
<dbReference type="GO" id="GO:0005856">
    <property type="term" value="C:cytoskeleton"/>
    <property type="evidence" value="ECO:0007669"/>
    <property type="project" value="UniProtKB-SubCell"/>
</dbReference>
<dbReference type="GO" id="GO:0005829">
    <property type="term" value="C:cytosol"/>
    <property type="evidence" value="ECO:0000318"/>
    <property type="project" value="GO_Central"/>
</dbReference>
<dbReference type="GO" id="GO:0005794">
    <property type="term" value="C:Golgi apparatus"/>
    <property type="evidence" value="ECO:0000266"/>
    <property type="project" value="RGD"/>
</dbReference>
<dbReference type="GO" id="GO:0005634">
    <property type="term" value="C:nucleus"/>
    <property type="evidence" value="ECO:0000314"/>
    <property type="project" value="BHF-UCL"/>
</dbReference>
<dbReference type="GO" id="GO:0005886">
    <property type="term" value="C:plasma membrane"/>
    <property type="evidence" value="ECO:0000266"/>
    <property type="project" value="RGD"/>
</dbReference>
<dbReference type="GO" id="GO:0042383">
    <property type="term" value="C:sarcolemma"/>
    <property type="evidence" value="ECO:0000314"/>
    <property type="project" value="RGD"/>
</dbReference>
<dbReference type="GO" id="GO:0003779">
    <property type="term" value="F:actin binding"/>
    <property type="evidence" value="ECO:0000314"/>
    <property type="project" value="RGD"/>
</dbReference>
<dbReference type="GO" id="GO:0003785">
    <property type="term" value="F:actin monomer binding"/>
    <property type="evidence" value="ECO:0000266"/>
    <property type="project" value="RGD"/>
</dbReference>
<dbReference type="GO" id="GO:0034618">
    <property type="term" value="F:arginine binding"/>
    <property type="evidence" value="ECO:0000266"/>
    <property type="project" value="RGD"/>
</dbReference>
<dbReference type="GO" id="GO:0008013">
    <property type="term" value="F:beta-catenin binding"/>
    <property type="evidence" value="ECO:0000353"/>
    <property type="project" value="RGD"/>
</dbReference>
<dbReference type="GO" id="GO:0045296">
    <property type="term" value="F:cadherin binding"/>
    <property type="evidence" value="ECO:0000353"/>
    <property type="project" value="RGD"/>
</dbReference>
<dbReference type="GO" id="GO:0005516">
    <property type="term" value="F:calmodulin binding"/>
    <property type="evidence" value="ECO:0000314"/>
    <property type="project" value="RGD"/>
</dbReference>
<dbReference type="GO" id="GO:0050660">
    <property type="term" value="F:flavin adenine dinucleotide binding"/>
    <property type="evidence" value="ECO:0000318"/>
    <property type="project" value="GO_Central"/>
</dbReference>
<dbReference type="GO" id="GO:0010181">
    <property type="term" value="F:FMN binding"/>
    <property type="evidence" value="ECO:0000318"/>
    <property type="project" value="GO_Central"/>
</dbReference>
<dbReference type="GO" id="GO:0020037">
    <property type="term" value="F:heme binding"/>
    <property type="evidence" value="ECO:0000266"/>
    <property type="project" value="RGD"/>
</dbReference>
<dbReference type="GO" id="GO:0051879">
    <property type="term" value="F:Hsp90 protein binding"/>
    <property type="evidence" value="ECO:0000314"/>
    <property type="project" value="RGD"/>
</dbReference>
<dbReference type="GO" id="GO:0046872">
    <property type="term" value="F:metal ion binding"/>
    <property type="evidence" value="ECO:0007669"/>
    <property type="project" value="UniProtKB-KW"/>
</dbReference>
<dbReference type="GO" id="GO:0050661">
    <property type="term" value="F:NADP binding"/>
    <property type="evidence" value="ECO:0007669"/>
    <property type="project" value="InterPro"/>
</dbReference>
<dbReference type="GO" id="GO:0004517">
    <property type="term" value="F:nitric-oxide synthase activity"/>
    <property type="evidence" value="ECO:0000314"/>
    <property type="project" value="RGD"/>
</dbReference>
<dbReference type="GO" id="GO:0050998">
    <property type="term" value="F:nitric-oxide synthase binding"/>
    <property type="evidence" value="ECO:0000353"/>
    <property type="project" value="RGD"/>
</dbReference>
<dbReference type="GO" id="GO:0097110">
    <property type="term" value="F:scaffold protein binding"/>
    <property type="evidence" value="ECO:0000353"/>
    <property type="project" value="RGD"/>
</dbReference>
<dbReference type="GO" id="GO:0034617">
    <property type="term" value="F:tetrahydrobiopterin binding"/>
    <property type="evidence" value="ECO:0000266"/>
    <property type="project" value="RGD"/>
</dbReference>
<dbReference type="GO" id="GO:0001525">
    <property type="term" value="P:angiogenesis"/>
    <property type="evidence" value="ECO:0000266"/>
    <property type="project" value="RGD"/>
</dbReference>
<dbReference type="GO" id="GO:0003180">
    <property type="term" value="P:aortic valve morphogenesis"/>
    <property type="evidence" value="ECO:0000266"/>
    <property type="project" value="RGD"/>
</dbReference>
<dbReference type="GO" id="GO:0006527">
    <property type="term" value="P:arginine catabolic process"/>
    <property type="evidence" value="ECO:0000266"/>
    <property type="project" value="RGD"/>
</dbReference>
<dbReference type="GO" id="GO:0097746">
    <property type="term" value="P:blood vessel diameter maintenance"/>
    <property type="evidence" value="ECO:0000266"/>
    <property type="project" value="RGD"/>
</dbReference>
<dbReference type="GO" id="GO:0001974">
    <property type="term" value="P:blood vessel remodeling"/>
    <property type="evidence" value="ECO:0000266"/>
    <property type="project" value="RGD"/>
</dbReference>
<dbReference type="GO" id="GO:0060348">
    <property type="term" value="P:bone development"/>
    <property type="evidence" value="ECO:0000270"/>
    <property type="project" value="RGD"/>
</dbReference>
<dbReference type="GO" id="GO:0006816">
    <property type="term" value="P:calcium ion transport"/>
    <property type="evidence" value="ECO:0000266"/>
    <property type="project" value="RGD"/>
</dbReference>
<dbReference type="GO" id="GO:0071320">
    <property type="term" value="P:cellular response to cAMP"/>
    <property type="evidence" value="ECO:0000270"/>
    <property type="project" value="RGD"/>
</dbReference>
<dbReference type="GO" id="GO:0071363">
    <property type="term" value="P:cellular response to growth factor stimulus"/>
    <property type="evidence" value="ECO:0000270"/>
    <property type="project" value="RGD"/>
</dbReference>
<dbReference type="GO" id="GO:0034605">
    <property type="term" value="P:cellular response to heat"/>
    <property type="evidence" value="ECO:0000270"/>
    <property type="project" value="RGD"/>
</dbReference>
<dbReference type="GO" id="GO:0071403">
    <property type="term" value="P:cellular response to high density lipoprotein particle stimulus"/>
    <property type="evidence" value="ECO:0000270"/>
    <property type="project" value="RGD"/>
</dbReference>
<dbReference type="GO" id="GO:0032869">
    <property type="term" value="P:cellular response to insulin stimulus"/>
    <property type="evidence" value="ECO:0000270"/>
    <property type="project" value="RGD"/>
</dbReference>
<dbReference type="GO" id="GO:0071404">
    <property type="term" value="P:cellular response to low-density lipoprotein particle stimulus"/>
    <property type="evidence" value="ECO:0000270"/>
    <property type="project" value="RGD"/>
</dbReference>
<dbReference type="GO" id="GO:0071286">
    <property type="term" value="P:cellular response to magnesium ion"/>
    <property type="evidence" value="ECO:0000270"/>
    <property type="project" value="RGD"/>
</dbReference>
<dbReference type="GO" id="GO:0071260">
    <property type="term" value="P:cellular response to mechanical stimulus"/>
    <property type="evidence" value="ECO:0000315"/>
    <property type="project" value="RGD"/>
</dbReference>
<dbReference type="GO" id="GO:1904648">
    <property type="term" value="P:cellular response to rotenone"/>
    <property type="evidence" value="ECO:0000270"/>
    <property type="project" value="RGD"/>
</dbReference>
<dbReference type="GO" id="GO:0071560">
    <property type="term" value="P:cellular response to transforming growth factor beta stimulus"/>
    <property type="evidence" value="ECO:0000315"/>
    <property type="project" value="RGD"/>
</dbReference>
<dbReference type="GO" id="GO:0071356">
    <property type="term" value="P:cellular response to tumor necrosis factor"/>
    <property type="evidence" value="ECO:0000270"/>
    <property type="project" value="RGD"/>
</dbReference>
<dbReference type="GO" id="GO:0003203">
    <property type="term" value="P:endocardial cushion morphogenesis"/>
    <property type="evidence" value="ECO:0000266"/>
    <property type="project" value="RGD"/>
</dbReference>
<dbReference type="GO" id="GO:0043542">
    <property type="term" value="P:endothelial cell migration"/>
    <property type="evidence" value="ECO:0000266"/>
    <property type="project" value="RGD"/>
</dbReference>
<dbReference type="GO" id="GO:0051649">
    <property type="term" value="P:establishment of localization in cell"/>
    <property type="evidence" value="ECO:0000266"/>
    <property type="project" value="RGD"/>
</dbReference>
<dbReference type="GO" id="GO:0007565">
    <property type="term" value="P:female pregnancy"/>
    <property type="evidence" value="ECO:0000270"/>
    <property type="project" value="RGD"/>
</dbReference>
<dbReference type="GO" id="GO:0048873">
    <property type="term" value="P:homeostasis of number of cells within a tissue"/>
    <property type="evidence" value="ECO:0000266"/>
    <property type="project" value="RGD"/>
</dbReference>
<dbReference type="GO" id="GO:0001701">
    <property type="term" value="P:in utero embryonic development"/>
    <property type="evidence" value="ECO:0000266"/>
    <property type="project" value="RGD"/>
</dbReference>
<dbReference type="GO" id="GO:0031663">
    <property type="term" value="P:lipopolysaccharide-mediated signaling pathway"/>
    <property type="evidence" value="ECO:0000266"/>
    <property type="project" value="RGD"/>
</dbReference>
<dbReference type="GO" id="GO:0030324">
    <property type="term" value="P:lung development"/>
    <property type="evidence" value="ECO:0000266"/>
    <property type="project" value="RGD"/>
</dbReference>
<dbReference type="GO" id="GO:0070168">
    <property type="term" value="P:negative regulation of biomineral tissue development"/>
    <property type="evidence" value="ECO:0000266"/>
    <property type="project" value="RGD"/>
</dbReference>
<dbReference type="GO" id="GO:0045776">
    <property type="term" value="P:negative regulation of blood pressure"/>
    <property type="evidence" value="ECO:0000318"/>
    <property type="project" value="GO_Central"/>
</dbReference>
<dbReference type="GO" id="GO:0051926">
    <property type="term" value="P:negative regulation of calcium ion transport"/>
    <property type="evidence" value="ECO:0000266"/>
    <property type="project" value="RGD"/>
</dbReference>
<dbReference type="GO" id="GO:0008285">
    <property type="term" value="P:negative regulation of cell population proliferation"/>
    <property type="evidence" value="ECO:0000266"/>
    <property type="project" value="RGD"/>
</dbReference>
<dbReference type="GO" id="GO:0014740">
    <property type="term" value="P:negative regulation of muscle hyperplasia"/>
    <property type="evidence" value="ECO:0000266"/>
    <property type="project" value="RGD"/>
</dbReference>
<dbReference type="GO" id="GO:0043267">
    <property type="term" value="P:negative regulation of potassium ion transport"/>
    <property type="evidence" value="ECO:0000266"/>
    <property type="project" value="RGD"/>
</dbReference>
<dbReference type="GO" id="GO:0048662">
    <property type="term" value="P:negative regulation of smooth muscle cell proliferation"/>
    <property type="evidence" value="ECO:0000315"/>
    <property type="project" value="RGD"/>
</dbReference>
<dbReference type="GO" id="GO:0006809">
    <property type="term" value="P:nitric oxide biosynthetic process"/>
    <property type="evidence" value="ECO:0000315"/>
    <property type="project" value="RGD"/>
</dbReference>
<dbReference type="GO" id="GO:0007263">
    <property type="term" value="P:nitric oxide mediated signal transduction"/>
    <property type="evidence" value="ECO:0000318"/>
    <property type="project" value="GO_Central"/>
</dbReference>
<dbReference type="GO" id="GO:0046209">
    <property type="term" value="P:nitric oxide metabolic process"/>
    <property type="evidence" value="ECO:0000270"/>
    <property type="project" value="RGD"/>
</dbReference>
<dbReference type="GO" id="GO:0001542">
    <property type="term" value="P:ovulation from ovarian follicle"/>
    <property type="evidence" value="ECO:0000266"/>
    <property type="project" value="RGD"/>
</dbReference>
<dbReference type="GO" id="GO:0045766">
    <property type="term" value="P:positive regulation of angiogenesis"/>
    <property type="evidence" value="ECO:0000266"/>
    <property type="project" value="RGD"/>
</dbReference>
<dbReference type="GO" id="GO:0043065">
    <property type="term" value="P:positive regulation of apoptotic process"/>
    <property type="evidence" value="ECO:0000315"/>
    <property type="project" value="RGD"/>
</dbReference>
<dbReference type="GO" id="GO:0043536">
    <property type="term" value="P:positive regulation of blood vessel endothelial cell migration"/>
    <property type="evidence" value="ECO:0000266"/>
    <property type="project" value="RGD"/>
</dbReference>
<dbReference type="GO" id="GO:0010628">
    <property type="term" value="P:positive regulation of gene expression"/>
    <property type="evidence" value="ECO:0000266"/>
    <property type="project" value="RGD"/>
</dbReference>
<dbReference type="GO" id="GO:0006813">
    <property type="term" value="P:potassium ion transport"/>
    <property type="evidence" value="ECO:0000266"/>
    <property type="project" value="RGD"/>
</dbReference>
<dbReference type="GO" id="GO:0003184">
    <property type="term" value="P:pulmonary valve morphogenesis"/>
    <property type="evidence" value="ECO:0000266"/>
    <property type="project" value="RGD"/>
</dbReference>
<dbReference type="GO" id="GO:0031644">
    <property type="term" value="P:regulation of nervous system process"/>
    <property type="evidence" value="ECO:0000266"/>
    <property type="project" value="RGD"/>
</dbReference>
<dbReference type="GO" id="GO:0002028">
    <property type="term" value="P:regulation of sodium ion transport"/>
    <property type="evidence" value="ECO:0000266"/>
    <property type="project" value="RGD"/>
</dbReference>
<dbReference type="GO" id="GO:0003100">
    <property type="term" value="P:regulation of systemic arterial blood pressure by endothelin"/>
    <property type="evidence" value="ECO:0000266"/>
    <property type="project" value="RGD"/>
</dbReference>
<dbReference type="GO" id="GO:0003057">
    <property type="term" value="P:regulation of the force of heart contraction by chemical signal"/>
    <property type="evidence" value="ECO:0000266"/>
    <property type="project" value="RGD"/>
</dbReference>
<dbReference type="GO" id="GO:0019430">
    <property type="term" value="P:removal of superoxide radicals"/>
    <property type="evidence" value="ECO:0000266"/>
    <property type="project" value="RGD"/>
</dbReference>
<dbReference type="GO" id="GO:0014823">
    <property type="term" value="P:response to activity"/>
    <property type="evidence" value="ECO:0000270"/>
    <property type="project" value="RGD"/>
</dbReference>
<dbReference type="GO" id="GO:0043200">
    <property type="term" value="P:response to amino acid"/>
    <property type="evidence" value="ECO:0000270"/>
    <property type="project" value="RGD"/>
</dbReference>
<dbReference type="GO" id="GO:0048678">
    <property type="term" value="P:response to axon injury"/>
    <property type="evidence" value="ECO:0000270"/>
    <property type="project" value="RGD"/>
</dbReference>
<dbReference type="GO" id="GO:0009743">
    <property type="term" value="P:response to carbohydrate"/>
    <property type="evidence" value="ECO:0000270"/>
    <property type="project" value="RGD"/>
</dbReference>
<dbReference type="GO" id="GO:0051412">
    <property type="term" value="P:response to corticosterone"/>
    <property type="evidence" value="ECO:0000270"/>
    <property type="project" value="RGD"/>
</dbReference>
<dbReference type="GO" id="GO:0034097">
    <property type="term" value="P:response to cytokine"/>
    <property type="evidence" value="ECO:0000270"/>
    <property type="project" value="RGD"/>
</dbReference>
<dbReference type="GO" id="GO:0036017">
    <property type="term" value="P:response to erythropoietin"/>
    <property type="evidence" value="ECO:0000270"/>
    <property type="project" value="RGD"/>
</dbReference>
<dbReference type="GO" id="GO:0032355">
    <property type="term" value="P:response to estradiol"/>
    <property type="evidence" value="ECO:0000314"/>
    <property type="project" value="RGD"/>
</dbReference>
<dbReference type="GO" id="GO:0045471">
    <property type="term" value="P:response to ethanol"/>
    <property type="evidence" value="ECO:0000270"/>
    <property type="project" value="RGD"/>
</dbReference>
<dbReference type="GO" id="GO:0034405">
    <property type="term" value="P:response to fluid shear stress"/>
    <property type="evidence" value="ECO:0000266"/>
    <property type="project" value="RGD"/>
</dbReference>
<dbReference type="GO" id="GO:0009750">
    <property type="term" value="P:response to fructose"/>
    <property type="evidence" value="ECO:0000270"/>
    <property type="project" value="RGD"/>
</dbReference>
<dbReference type="GO" id="GO:0009725">
    <property type="term" value="P:response to hormone"/>
    <property type="evidence" value="ECO:0000318"/>
    <property type="project" value="GO_Central"/>
</dbReference>
<dbReference type="GO" id="GO:0055093">
    <property type="term" value="P:response to hyperoxia"/>
    <property type="evidence" value="ECO:0000270"/>
    <property type="project" value="RGD"/>
</dbReference>
<dbReference type="GO" id="GO:0001666">
    <property type="term" value="P:response to hypoxia"/>
    <property type="evidence" value="ECO:0000270"/>
    <property type="project" value="RGD"/>
</dbReference>
<dbReference type="GO" id="GO:1901654">
    <property type="term" value="P:response to ketone"/>
    <property type="evidence" value="ECO:0000270"/>
    <property type="project" value="RGD"/>
</dbReference>
<dbReference type="GO" id="GO:1903576">
    <property type="term" value="P:response to L-arginine"/>
    <property type="evidence" value="ECO:0000270"/>
    <property type="project" value="RGD"/>
</dbReference>
<dbReference type="GO" id="GO:0010288">
    <property type="term" value="P:response to lead ion"/>
    <property type="evidence" value="ECO:0000270"/>
    <property type="project" value="RGD"/>
</dbReference>
<dbReference type="GO" id="GO:0032496">
    <property type="term" value="P:response to lipopolysaccharide"/>
    <property type="evidence" value="ECO:0000270"/>
    <property type="project" value="RGD"/>
</dbReference>
<dbReference type="GO" id="GO:0071000">
    <property type="term" value="P:response to magnetism"/>
    <property type="evidence" value="ECO:0000270"/>
    <property type="project" value="RGD"/>
</dbReference>
<dbReference type="GO" id="GO:0009612">
    <property type="term" value="P:response to mechanical stimulus"/>
    <property type="evidence" value="ECO:0000270"/>
    <property type="project" value="RGD"/>
</dbReference>
<dbReference type="GO" id="GO:0046689">
    <property type="term" value="P:response to mercury ion"/>
    <property type="evidence" value="ECO:0000270"/>
    <property type="project" value="RGD"/>
</dbReference>
<dbReference type="GO" id="GO:0010038">
    <property type="term" value="P:response to metal ion"/>
    <property type="evidence" value="ECO:0000270"/>
    <property type="project" value="RGD"/>
</dbReference>
<dbReference type="GO" id="GO:0035094">
    <property type="term" value="P:response to nicotine"/>
    <property type="evidence" value="ECO:0000270"/>
    <property type="project" value="RGD"/>
</dbReference>
<dbReference type="GO" id="GO:0031667">
    <property type="term" value="P:response to nutrient levels"/>
    <property type="evidence" value="ECO:0000270"/>
    <property type="project" value="RGD"/>
</dbReference>
<dbReference type="GO" id="GO:1901652">
    <property type="term" value="P:response to peptide"/>
    <property type="evidence" value="ECO:0000270"/>
    <property type="project" value="RGD"/>
</dbReference>
<dbReference type="GO" id="GO:0043434">
    <property type="term" value="P:response to peptide hormone"/>
    <property type="evidence" value="ECO:0000270"/>
    <property type="project" value="RGD"/>
</dbReference>
<dbReference type="GO" id="GO:1902074">
    <property type="term" value="P:response to salt"/>
    <property type="evidence" value="ECO:0000270"/>
    <property type="project" value="RGD"/>
</dbReference>
<dbReference type="GO" id="GO:1990478">
    <property type="term" value="P:response to ultrasound"/>
    <property type="evidence" value="ECO:0000270"/>
    <property type="project" value="RGD"/>
</dbReference>
<dbReference type="GO" id="GO:0009410">
    <property type="term" value="P:response to xenobiotic stimulus"/>
    <property type="evidence" value="ECO:0000270"/>
    <property type="project" value="RGD"/>
</dbReference>
<dbReference type="GO" id="GO:0060041">
    <property type="term" value="P:retina development in camera-type eye"/>
    <property type="evidence" value="ECO:0000270"/>
    <property type="project" value="RGD"/>
</dbReference>
<dbReference type="GO" id="GO:0014806">
    <property type="term" value="P:smooth muscle hyperplasia"/>
    <property type="evidence" value="ECO:0000266"/>
    <property type="project" value="RGD"/>
</dbReference>
<dbReference type="GO" id="GO:0042311">
    <property type="term" value="P:vasodilation"/>
    <property type="evidence" value="ECO:0000266"/>
    <property type="project" value="RGD"/>
</dbReference>
<dbReference type="GO" id="GO:0060412">
    <property type="term" value="P:ventricular septum morphogenesis"/>
    <property type="evidence" value="ECO:0000266"/>
    <property type="project" value="RGD"/>
</dbReference>
<dbReference type="CDD" id="cd00795">
    <property type="entry name" value="NOS_oxygenase_euk"/>
    <property type="match status" value="1"/>
</dbReference>
<dbReference type="FunFam" id="3.90.440.10:FF:000001">
    <property type="entry name" value="Endothelial nitric oxide synthase"/>
    <property type="match status" value="1"/>
</dbReference>
<dbReference type="FunFam" id="1.20.990.10:FF:000005">
    <property type="entry name" value="Nitric oxide synthase"/>
    <property type="match status" value="1"/>
</dbReference>
<dbReference type="FunFam" id="3.40.50.360:FF:000003">
    <property type="entry name" value="Nitric oxide synthase"/>
    <property type="match status" value="1"/>
</dbReference>
<dbReference type="FunFam" id="3.40.50.80:FF:000003">
    <property type="entry name" value="Nitric oxide synthase"/>
    <property type="match status" value="1"/>
</dbReference>
<dbReference type="FunFam" id="3.90.1230.10:FF:000001">
    <property type="entry name" value="Nitric oxide synthase, brain"/>
    <property type="match status" value="1"/>
</dbReference>
<dbReference type="Gene3D" id="3.40.50.360">
    <property type="match status" value="1"/>
</dbReference>
<dbReference type="Gene3D" id="1.20.990.10">
    <property type="entry name" value="NADPH-cytochrome p450 Reductase, Chain A, domain 3"/>
    <property type="match status" value="1"/>
</dbReference>
<dbReference type="Gene3D" id="3.90.340.10">
    <property type="entry name" value="Nitric Oxide Synthase, Chain A, domain 1"/>
    <property type="match status" value="1"/>
</dbReference>
<dbReference type="Gene3D" id="3.90.1230.10">
    <property type="entry name" value="Nitric Oxide Synthase, Chain A, domain 3"/>
    <property type="match status" value="1"/>
</dbReference>
<dbReference type="Gene3D" id="3.90.440.10">
    <property type="entry name" value="Nitric Oxide Synthase,Heme Domain,Chain A domain 2"/>
    <property type="match status" value="1"/>
</dbReference>
<dbReference type="Gene3D" id="3.40.50.80">
    <property type="entry name" value="Nucleotide-binding domain of ferredoxin-NADP reductase (FNR) module"/>
    <property type="match status" value="1"/>
</dbReference>
<dbReference type="Gene3D" id="2.40.30.10">
    <property type="entry name" value="Translation factors"/>
    <property type="match status" value="1"/>
</dbReference>
<dbReference type="InterPro" id="IPR003097">
    <property type="entry name" value="CysJ-like_FAD-binding"/>
</dbReference>
<dbReference type="InterPro" id="IPR017927">
    <property type="entry name" value="FAD-bd_FR_type"/>
</dbReference>
<dbReference type="InterPro" id="IPR001094">
    <property type="entry name" value="Flavdoxin-like"/>
</dbReference>
<dbReference type="InterPro" id="IPR008254">
    <property type="entry name" value="Flavodoxin/NO_synth"/>
</dbReference>
<dbReference type="InterPro" id="IPR001709">
    <property type="entry name" value="Flavoprot_Pyr_Nucl_cyt_Rdtase"/>
</dbReference>
<dbReference type="InterPro" id="IPR029039">
    <property type="entry name" value="Flavoprotein-like_sf"/>
</dbReference>
<dbReference type="InterPro" id="IPR039261">
    <property type="entry name" value="FNR_nucleotide-bd"/>
</dbReference>
<dbReference type="InterPro" id="IPR023173">
    <property type="entry name" value="NADPH_Cyt_P450_Rdtase_alpha"/>
</dbReference>
<dbReference type="InterPro" id="IPR050607">
    <property type="entry name" value="NOS"/>
</dbReference>
<dbReference type="InterPro" id="IPR044943">
    <property type="entry name" value="NOS_dom_1"/>
</dbReference>
<dbReference type="InterPro" id="IPR044940">
    <property type="entry name" value="NOS_dom_2"/>
</dbReference>
<dbReference type="InterPro" id="IPR044944">
    <property type="entry name" value="NOS_dom_3"/>
</dbReference>
<dbReference type="InterPro" id="IPR012144">
    <property type="entry name" value="NOS_euk"/>
</dbReference>
<dbReference type="InterPro" id="IPR004030">
    <property type="entry name" value="NOS_N"/>
</dbReference>
<dbReference type="InterPro" id="IPR036119">
    <property type="entry name" value="NOS_N_sf"/>
</dbReference>
<dbReference type="InterPro" id="IPR001433">
    <property type="entry name" value="OxRdtase_FAD/NAD-bd"/>
</dbReference>
<dbReference type="InterPro" id="IPR017938">
    <property type="entry name" value="Riboflavin_synthase-like_b-brl"/>
</dbReference>
<dbReference type="PANTHER" id="PTHR43410:SF1">
    <property type="entry name" value="NITRIC OXIDE SYNTHASE"/>
    <property type="match status" value="1"/>
</dbReference>
<dbReference type="PANTHER" id="PTHR43410">
    <property type="entry name" value="NITRIC OXIDE SYNTHASE OXYGENASE"/>
    <property type="match status" value="1"/>
</dbReference>
<dbReference type="Pfam" id="PF00667">
    <property type="entry name" value="FAD_binding_1"/>
    <property type="match status" value="1"/>
</dbReference>
<dbReference type="Pfam" id="PF00258">
    <property type="entry name" value="Flavodoxin_1"/>
    <property type="match status" value="1"/>
</dbReference>
<dbReference type="Pfam" id="PF00175">
    <property type="entry name" value="NAD_binding_1"/>
    <property type="match status" value="1"/>
</dbReference>
<dbReference type="Pfam" id="PF02898">
    <property type="entry name" value="NO_synthase"/>
    <property type="match status" value="1"/>
</dbReference>
<dbReference type="PIRSF" id="PIRSF000333">
    <property type="entry name" value="NOS"/>
    <property type="match status" value="1"/>
</dbReference>
<dbReference type="PRINTS" id="PR00369">
    <property type="entry name" value="FLAVODOXIN"/>
</dbReference>
<dbReference type="PRINTS" id="PR00371">
    <property type="entry name" value="FPNCR"/>
</dbReference>
<dbReference type="SUPFAM" id="SSF52343">
    <property type="entry name" value="Ferredoxin reductase-like, C-terminal NADP-linked domain"/>
    <property type="match status" value="1"/>
</dbReference>
<dbReference type="SUPFAM" id="SSF52218">
    <property type="entry name" value="Flavoproteins"/>
    <property type="match status" value="1"/>
</dbReference>
<dbReference type="SUPFAM" id="SSF56512">
    <property type="entry name" value="Nitric oxide (NO) synthase oxygenase domain"/>
    <property type="match status" value="1"/>
</dbReference>
<dbReference type="SUPFAM" id="SSF63380">
    <property type="entry name" value="Riboflavin synthase domain-like"/>
    <property type="match status" value="1"/>
</dbReference>
<dbReference type="PROSITE" id="PS51384">
    <property type="entry name" value="FAD_FR"/>
    <property type="match status" value="1"/>
</dbReference>
<dbReference type="PROSITE" id="PS50902">
    <property type="entry name" value="FLAVODOXIN_LIKE"/>
    <property type="match status" value="1"/>
</dbReference>
<dbReference type="PROSITE" id="PS60001">
    <property type="entry name" value="NOS"/>
    <property type="match status" value="1"/>
</dbReference>
<protein>
    <recommendedName>
        <fullName evidence="13">Nitric oxide synthase 3</fullName>
        <ecNumber evidence="3">1.14.13.39</ecNumber>
    </recommendedName>
    <alternativeName>
        <fullName>Constitutive NOS</fullName>
        <shortName>cNOS</shortName>
    </alternativeName>
    <alternativeName>
        <fullName>EC-NOS</fullName>
    </alternativeName>
    <alternativeName>
        <fullName>NOS type III</fullName>
        <shortName>NOSIII</shortName>
    </alternativeName>
    <alternativeName>
        <fullName evidence="12">Nitric oxide synthase, endothelial</fullName>
        <shortName evidence="12">Endothelial NOS</shortName>
        <shortName evidence="12">eNOS</shortName>
    </alternativeName>
</protein>
<gene>
    <name evidence="13" type="primary">Nos3</name>
</gene>
<name>NOS3_RAT</name>
<accession>Q62600</accession>
<accession>O88672</accession>
<accession>O89041</accession>
<accession>Q62734</accession>
<accession>Q68GV6</accession>
<accession>Q75NE4</accession>
<evidence type="ECO:0000250" key="1"/>
<evidence type="ECO:0000250" key="2">
    <source>
        <dbReference type="UniProtKB" id="P29473"/>
    </source>
</evidence>
<evidence type="ECO:0000250" key="3">
    <source>
        <dbReference type="UniProtKB" id="P29474"/>
    </source>
</evidence>
<evidence type="ECO:0000250" key="4">
    <source>
        <dbReference type="UniProtKB" id="P29476"/>
    </source>
</evidence>
<evidence type="ECO:0000250" key="5">
    <source>
        <dbReference type="UniProtKB" id="P35228"/>
    </source>
</evidence>
<evidence type="ECO:0000250" key="6">
    <source>
        <dbReference type="UniProtKB" id="P70313"/>
    </source>
</evidence>
<evidence type="ECO:0000255" key="7"/>
<evidence type="ECO:0000255" key="8">
    <source>
        <dbReference type="PROSITE-ProRule" id="PRU00088"/>
    </source>
</evidence>
<evidence type="ECO:0000255" key="9">
    <source>
        <dbReference type="PROSITE-ProRule" id="PRU00716"/>
    </source>
</evidence>
<evidence type="ECO:0000256" key="10">
    <source>
        <dbReference type="SAM" id="MobiDB-lite"/>
    </source>
</evidence>
<evidence type="ECO:0000269" key="11">
    <source>
    </source>
</evidence>
<evidence type="ECO:0000305" key="12"/>
<evidence type="ECO:0000312" key="13">
    <source>
        <dbReference type="RGD" id="3186"/>
    </source>
</evidence>
<evidence type="ECO:0007744" key="14">
    <source>
    </source>
</evidence>
<reference key="1">
    <citation type="journal article" date="2004" name="J. Biol. Chem.">
        <title>NIDD, a novel DHHC-containing protein, targets neuronal nitric-oxide synthase (nNOS) to the synaptic membrane through a PDZ-dependent interaction and regulates nNOS activity.</title>
        <authorList>
            <person name="Saitoh F."/>
            <person name="Tian Q.B."/>
            <person name="Okano A."/>
            <person name="Sakagami H."/>
            <person name="Kondo H."/>
            <person name="Suzuki T."/>
        </authorList>
    </citation>
    <scope>NUCLEOTIDE SEQUENCE [MRNA]</scope>
</reference>
<reference key="2">
    <citation type="submission" date="1998-08" db="EMBL/GenBank/DDBJ databases">
        <title>Downregulation of endothelial nitric oxide synthase (NOS III) in rat aorta following in-vivo hypoxia.</title>
        <authorList>
            <person name="Toporsian M."/>
            <person name="Govindaraju K."/>
            <person name="Nagi M."/>
            <person name="Eidelman D."/>
            <person name="Thibault G."/>
            <person name="Ward M.E."/>
        </authorList>
    </citation>
    <scope>NUCLEOTIDE SEQUENCE [MRNA] OF 1-288</scope>
    <source>
        <strain>Sprague-Dawley</strain>
    </source>
</reference>
<reference key="3">
    <citation type="journal article" date="2005" name="J. Mol. Cell. Cardiol.">
        <title>Increased resistance to myocardial ischemia in the Brown Norway vs. Dahl S rat: role of nitric oxide synthase and Hsp90.</title>
        <authorList>
            <person name="Shi Y."/>
            <person name="Hutchins W."/>
            <person name="Ogawa H."/>
            <person name="Chang C.-C."/>
            <person name="Pritchard K.A. Jr."/>
            <person name="Zhang C."/>
            <person name="Khampang P."/>
            <person name="Lazar J."/>
            <person name="Jacob H.J."/>
            <person name="Rafiee P."/>
            <person name="Baker J.E."/>
        </authorList>
    </citation>
    <scope>NUCLEOTIDE SEQUENCE [MRNA] OF 14-1202</scope>
    <source>
        <strain>SS/JrHsdMcwi</strain>
        <tissue>Heart</tissue>
    </source>
</reference>
<reference key="4">
    <citation type="submission" date="1998-09" db="EMBL/GenBank/DDBJ databases">
        <title>Cloning and expression of the rat endothelial nitric oxide synthase.</title>
        <authorList>
            <person name="Seidel B."/>
            <person name="Jiang L."/>
            <person name="Wolf G."/>
        </authorList>
    </citation>
    <scope>NUCLEOTIDE SEQUENCE [MRNA] OF 473-672 AND 951-1192</scope>
    <source>
        <tissue>Brain</tissue>
    </source>
</reference>
<reference key="5">
    <citation type="journal article" date="1994" name="Kidney Int.">
        <title>Differential expression and induction of mRNAs encoding two inducible nitric oxide synthases in rat kidney.</title>
        <authorList>
            <person name="Mohaupt M.G."/>
            <person name="Elzie J.L."/>
            <person name="Ahn K.Y."/>
            <person name="Clapp W.L."/>
            <person name="Wilcox C.S."/>
            <person name="Kone B.C."/>
        </authorList>
    </citation>
    <scope>NUCLEOTIDE SEQUENCE [MRNA] OF 633-862</scope>
    <source>
        <strain>Sprague-Dawley</strain>
    </source>
</reference>
<reference key="6">
    <citation type="submission" date="1998-09" db="EMBL/GenBank/DDBJ databases">
        <title>Endothelin-1, endothelin receptors and ecNOS mRNA expression in vital organs during traumatic shock in rats.</title>
        <authorList>
            <person name="Minchenko A.G."/>
            <person name="Armstead V.E."/>
            <person name="Opentanova I.L."/>
            <person name="Lefer A.M."/>
        </authorList>
    </citation>
    <scope>NUCLEOTIDE SEQUENCE [MRNA] OF 1015-1132</scope>
    <source>
        <strain>Sprague-Dawley</strain>
        <tissue>Lung</tissue>
    </source>
</reference>
<reference key="7">
    <citation type="journal article" date="1995" name="Am. J. Physiol.">
        <title>Constitutive endothelial nitric oxide synthase gene expression is regulated during lung development.</title>
        <authorList>
            <person name="Kawai N."/>
            <person name="Bloch D.B."/>
            <person name="Filippov G."/>
            <person name="Rabkina D."/>
            <person name="Suen H.C."/>
            <person name="Losty P.D."/>
            <person name="Janssens S.P."/>
            <person name="Zapol W.M."/>
            <person name="de la Monte S."/>
            <person name="Bloch K.D."/>
        </authorList>
    </citation>
    <scope>NUCLEOTIDE SEQUENCE [MRNA] OF 1018-1080</scope>
    <source>
        <strain>Sprague-Dawley</strain>
        <tissue>Lung</tissue>
    </source>
</reference>
<reference key="8">
    <citation type="journal article" date="1999" name="FEBS Lett.">
        <title>AMP-activated protein kinase phosphorylation of endothelial NO synthase.</title>
        <authorList>
            <person name="Chen Z.P."/>
            <person name="Mitchelhill K.I."/>
            <person name="Michell B.J."/>
            <person name="Stapleton D."/>
            <person name="Rodriguez-Crespo I."/>
            <person name="Witters L.A."/>
            <person name="Power D.A."/>
            <person name="Ortiz de Montellano P.R."/>
            <person name="Kemp B.E."/>
        </authorList>
    </citation>
    <scope>PHOSPHORYLATION AT THR-494 AND SER-1176</scope>
</reference>
<reference key="9">
    <citation type="journal article" date="2012" name="Nat. Commun.">
        <title>Quantitative maps of protein phosphorylation sites across 14 different rat organs and tissues.</title>
        <authorList>
            <person name="Lundby A."/>
            <person name="Secher A."/>
            <person name="Lage K."/>
            <person name="Nordsborg N.B."/>
            <person name="Dmytriyev A."/>
            <person name="Lundby C."/>
            <person name="Olsen J.V."/>
        </authorList>
    </citation>
    <scope>PHOSPHORYLATION [LARGE SCALE ANALYSIS] AT THR-1174 AND SER-1176</scope>
    <scope>IDENTIFICATION BY MASS SPECTROMETRY [LARGE SCALE ANALYSIS]</scope>
</reference>
<feature type="initiator methionine" description="Removed" evidence="2">
    <location>
        <position position="1"/>
    </location>
</feature>
<feature type="chain" id="PRO_0000170946" description="Nitric oxide synthase 3">
    <location>
        <begin position="2"/>
        <end position="1202"/>
    </location>
</feature>
<feature type="domain" description="Flavodoxin-like" evidence="8">
    <location>
        <begin position="519"/>
        <end position="702"/>
    </location>
</feature>
<feature type="domain" description="FAD-binding FR-type" evidence="9">
    <location>
        <begin position="755"/>
        <end position="1001"/>
    </location>
</feature>
<feature type="region of interest" description="Disordered" evidence="10">
    <location>
        <begin position="1"/>
        <end position="70"/>
    </location>
</feature>
<feature type="region of interest" description="Interaction with NOSIP" evidence="1">
    <location>
        <begin position="97"/>
        <end position="485"/>
    </location>
</feature>
<feature type="region of interest" description="Calmodulin-binding" evidence="7">
    <location>
        <begin position="489"/>
        <end position="509"/>
    </location>
</feature>
<feature type="region of interest" description="Disordered" evidence="10">
    <location>
        <begin position="817"/>
        <end position="843"/>
    </location>
</feature>
<feature type="compositionally biased region" description="Gly residues" evidence="10">
    <location>
        <begin position="15"/>
        <end position="27"/>
    </location>
</feature>
<feature type="compositionally biased region" description="Pro residues" evidence="10">
    <location>
        <begin position="33"/>
        <end position="65"/>
    </location>
</feature>
<feature type="binding site" evidence="5">
    <location>
        <position position="93"/>
    </location>
    <ligand>
        <name>Zn(2+)</name>
        <dbReference type="ChEBI" id="CHEBI:29105"/>
        <note>ligand shared between homodimeric partners</note>
    </ligand>
</feature>
<feature type="binding site" evidence="5">
    <location>
        <position position="98"/>
    </location>
    <ligand>
        <name>Zn(2+)</name>
        <dbReference type="ChEBI" id="CHEBI:29105"/>
        <note>ligand shared between homodimeric partners</note>
    </ligand>
</feature>
<feature type="binding site" evidence="3">
    <location>
        <position position="101"/>
    </location>
    <ligand>
        <name>(6R)-L-erythro-5,6,7,8-tetrahydrobiopterin</name>
        <dbReference type="ChEBI" id="CHEBI:59560"/>
    </ligand>
</feature>
<feature type="binding site" description="axial binding residue" evidence="3">
    <location>
        <position position="183"/>
    </location>
    <ligand>
        <name>heme b</name>
        <dbReference type="ChEBI" id="CHEBI:60344"/>
    </ligand>
    <ligandPart>
        <name>Fe</name>
        <dbReference type="ChEBI" id="CHEBI:18248"/>
    </ligandPart>
</feature>
<feature type="binding site" evidence="3">
    <location>
        <position position="246"/>
    </location>
    <ligand>
        <name>L-arginine</name>
        <dbReference type="ChEBI" id="CHEBI:32682"/>
    </ligand>
</feature>
<feature type="binding site" evidence="3">
    <location>
        <position position="355"/>
    </location>
    <ligand>
        <name>L-arginine</name>
        <dbReference type="ChEBI" id="CHEBI:32682"/>
    </ligand>
</feature>
<feature type="binding site" evidence="3">
    <location>
        <position position="356"/>
    </location>
    <ligand>
        <name>L-arginine</name>
        <dbReference type="ChEBI" id="CHEBI:32682"/>
    </ligand>
</feature>
<feature type="binding site" evidence="3">
    <location>
        <position position="360"/>
    </location>
    <ligand>
        <name>L-arginine</name>
        <dbReference type="ChEBI" id="CHEBI:32682"/>
    </ligand>
</feature>
<feature type="binding site" evidence="3">
    <location>
        <position position="445"/>
    </location>
    <ligand>
        <name>(6R)-L-erythro-5,6,7,8-tetrahydrobiopterin</name>
        <dbReference type="ChEBI" id="CHEBI:59560"/>
    </ligand>
</feature>
<feature type="binding site" evidence="3">
    <location>
        <position position="446"/>
    </location>
    <ligand>
        <name>(6R)-L-erythro-5,6,7,8-tetrahydrobiopterin</name>
        <dbReference type="ChEBI" id="CHEBI:59560"/>
    </ligand>
</feature>
<feature type="binding site" evidence="3">
    <location>
        <position position="459"/>
    </location>
    <ligand>
        <name>(6R)-L-erythro-5,6,7,8-tetrahydrobiopterin</name>
        <dbReference type="ChEBI" id="CHEBI:59560"/>
    </ligand>
</feature>
<feature type="binding site" evidence="3">
    <location>
        <position position="474"/>
    </location>
    <ligand>
        <name>heme b</name>
        <dbReference type="ChEBI" id="CHEBI:60344"/>
    </ligand>
</feature>
<feature type="binding site" evidence="5">
    <location>
        <position position="525"/>
    </location>
    <ligand>
        <name>FMN</name>
        <dbReference type="ChEBI" id="CHEBI:58210"/>
    </ligand>
</feature>
<feature type="binding site" evidence="5">
    <location>
        <position position="526"/>
    </location>
    <ligand>
        <name>FMN</name>
        <dbReference type="ChEBI" id="CHEBI:58210"/>
    </ligand>
</feature>
<feature type="binding site" evidence="5">
    <location>
        <position position="527"/>
    </location>
    <ligand>
        <name>FMN</name>
        <dbReference type="ChEBI" id="CHEBI:58210"/>
    </ligand>
</feature>
<feature type="binding site" evidence="5">
    <location>
        <position position="529"/>
    </location>
    <ligand>
        <name>FMN</name>
        <dbReference type="ChEBI" id="CHEBI:58210"/>
    </ligand>
</feature>
<feature type="binding site" evidence="5">
    <location>
        <position position="571"/>
    </location>
    <ligand>
        <name>FMN</name>
        <dbReference type="ChEBI" id="CHEBI:58210"/>
    </ligand>
</feature>
<feature type="binding site" evidence="5">
    <location>
        <position position="572"/>
    </location>
    <ligand>
        <name>FMN</name>
        <dbReference type="ChEBI" id="CHEBI:58210"/>
    </ligand>
</feature>
<feature type="binding site" evidence="5">
    <location>
        <position position="653"/>
    </location>
    <ligand>
        <name>FMN</name>
        <dbReference type="ChEBI" id="CHEBI:58210"/>
    </ligand>
</feature>
<feature type="binding site" evidence="5">
    <location>
        <position position="660"/>
    </location>
    <ligand>
        <name>FMN</name>
        <dbReference type="ChEBI" id="CHEBI:58210"/>
    </ligand>
</feature>
<feature type="binding site" evidence="5">
    <location>
        <position position="686"/>
    </location>
    <ligand>
        <name>FMN</name>
        <dbReference type="ChEBI" id="CHEBI:58210"/>
    </ligand>
</feature>
<feature type="binding site" evidence="5">
    <location>
        <position position="690"/>
    </location>
    <ligand>
        <name>FMN</name>
        <dbReference type="ChEBI" id="CHEBI:58210"/>
    </ligand>
</feature>
<feature type="binding site" evidence="4">
    <location>
        <position position="775"/>
    </location>
    <ligand>
        <name>NADP(+)</name>
        <dbReference type="ChEBI" id="CHEBI:58349"/>
    </ligand>
</feature>
<feature type="binding site" evidence="4">
    <location>
        <position position="797"/>
    </location>
    <ligand>
        <name>FAD</name>
        <dbReference type="ChEBI" id="CHEBI:57692"/>
    </ligand>
</feature>
<feature type="binding site" evidence="4">
    <location>
        <position position="937"/>
    </location>
    <ligand>
        <name>FAD</name>
        <dbReference type="ChEBI" id="CHEBI:57692"/>
    </ligand>
</feature>
<feature type="binding site" evidence="4">
    <location>
        <position position="939"/>
    </location>
    <ligand>
        <name>FAD</name>
        <dbReference type="ChEBI" id="CHEBI:57692"/>
    </ligand>
</feature>
<feature type="binding site" evidence="4">
    <location>
        <position position="940"/>
    </location>
    <ligand>
        <name>FAD</name>
        <dbReference type="ChEBI" id="CHEBI:57692"/>
    </ligand>
</feature>
<feature type="binding site" evidence="4">
    <location>
        <position position="955"/>
    </location>
    <ligand>
        <name>FAD</name>
        <dbReference type="ChEBI" id="CHEBI:57692"/>
    </ligand>
</feature>
<feature type="binding site" evidence="4">
    <location>
        <position position="957"/>
    </location>
    <ligand>
        <name>FAD</name>
        <dbReference type="ChEBI" id="CHEBI:57692"/>
    </ligand>
</feature>
<feature type="binding site" evidence="4">
    <location>
        <position position="961"/>
    </location>
    <ligand>
        <name>FAD</name>
        <dbReference type="ChEBI" id="CHEBI:57692"/>
    </ligand>
</feature>
<feature type="binding site" evidence="4">
    <location>
        <position position="974"/>
    </location>
    <ligand>
        <name>FAD</name>
        <dbReference type="ChEBI" id="CHEBI:57692"/>
    </ligand>
</feature>
<feature type="binding site" evidence="4">
    <location>
        <position position="975"/>
    </location>
    <ligand>
        <name>FAD</name>
        <dbReference type="ChEBI" id="CHEBI:57692"/>
    </ligand>
</feature>
<feature type="binding site" evidence="4">
    <location>
        <position position="976"/>
    </location>
    <ligand>
        <name>FAD</name>
        <dbReference type="ChEBI" id="CHEBI:57692"/>
    </ligand>
</feature>
<feature type="binding site" evidence="4">
    <location>
        <position position="1015"/>
    </location>
    <ligand>
        <name>NADP(+)</name>
        <dbReference type="ChEBI" id="CHEBI:58349"/>
    </ligand>
</feature>
<feature type="binding site" evidence="4">
    <location>
        <position position="1048"/>
    </location>
    <ligand>
        <name>NADP(+)</name>
        <dbReference type="ChEBI" id="CHEBI:58349"/>
    </ligand>
</feature>
<feature type="binding site" evidence="4">
    <location>
        <position position="1077"/>
    </location>
    <ligand>
        <name>NADP(+)</name>
        <dbReference type="ChEBI" id="CHEBI:58349"/>
    </ligand>
</feature>
<feature type="binding site" evidence="4">
    <location>
        <position position="1078"/>
    </location>
    <ligand>
        <name>NADP(+)</name>
        <dbReference type="ChEBI" id="CHEBI:58349"/>
    </ligand>
</feature>
<feature type="binding site" evidence="4">
    <location>
        <position position="1084"/>
    </location>
    <ligand>
        <name>NADP(+)</name>
        <dbReference type="ChEBI" id="CHEBI:58349"/>
    </ligand>
</feature>
<feature type="binding site" evidence="4">
    <location>
        <position position="1086"/>
    </location>
    <ligand>
        <name>NADP(+)</name>
        <dbReference type="ChEBI" id="CHEBI:58349"/>
    </ligand>
</feature>
<feature type="binding site" evidence="4">
    <location>
        <position position="1088"/>
    </location>
    <ligand>
        <name>NADP(+)</name>
        <dbReference type="ChEBI" id="CHEBI:58349"/>
    </ligand>
</feature>
<feature type="modified residue" description="Phosphothreonine; by AMPK" evidence="11">
    <location>
        <position position="494"/>
    </location>
</feature>
<feature type="modified residue" description="Phosphoserine" evidence="6">
    <location>
        <position position="614"/>
    </location>
</feature>
<feature type="modified residue" description="Phosphoserine" evidence="2">
    <location>
        <position position="632"/>
    </location>
</feature>
<feature type="modified residue" description="Phosphoserine" evidence="3">
    <location>
        <position position="637"/>
    </location>
</feature>
<feature type="modified residue" description="Phosphoserine" evidence="3">
    <location>
        <position position="835"/>
    </location>
</feature>
<feature type="modified residue" description="Phosphothreonine" evidence="14">
    <location>
        <position position="1174"/>
    </location>
</feature>
<feature type="modified residue" description="Phosphoserine; by AMPK" evidence="11 14">
    <location>
        <position position="1176"/>
    </location>
</feature>
<feature type="modified residue" description="Phosphoserine" evidence="6">
    <location>
        <position position="1178"/>
    </location>
</feature>
<feature type="lipid moiety-binding region" description="N-myristoyl glycine" evidence="1">
    <location>
        <position position="2"/>
    </location>
</feature>
<feature type="lipid moiety-binding region" description="S-palmitoyl cysteine" evidence="1">
    <location>
        <position position="15"/>
    </location>
</feature>
<feature type="lipid moiety-binding region" description="S-palmitoyl cysteine" evidence="1">
    <location>
        <position position="26"/>
    </location>
</feature>
<feature type="sequence conflict" description="In Ref. 2; AAC34677." evidence="12" ref="2">
    <original>QR</original>
    <variation>PS</variation>
    <location>
        <begin position="232"/>
        <end position="233"/>
    </location>
</feature>
<feature type="sequence conflict" description="In Ref. 2; AAC34677." evidence="12" ref="2">
    <original>R</original>
    <variation>S</variation>
    <location>
        <position position="249"/>
    </location>
</feature>
<feature type="sequence conflict" description="In Ref. 3; AAT99567." evidence="12" ref="3">
    <location>
        <begin position="298"/>
        <end position="304"/>
    </location>
</feature>
<feature type="sequence conflict" description="In Ref. 4; CAA09493." evidence="12" ref="4">
    <original>P</original>
    <variation>L</variation>
    <location>
        <position position="600"/>
    </location>
</feature>
<feature type="sequence conflict" description="In Ref. 3; AAT99567." evidence="12" ref="3">
    <original>R</original>
    <variation>G</variation>
    <location>
        <position position="735"/>
    </location>
</feature>
<feature type="sequence conflict" description="In Ref. 3; AAT99567." evidence="12" ref="3">
    <original>Q</original>
    <variation>P</variation>
    <location>
        <position position="739"/>
    </location>
</feature>
<feature type="sequence conflict" description="In Ref. 1; BAD15356." evidence="12" ref="1">
    <original>R</original>
    <variation>G</variation>
    <location>
        <position position="748"/>
    </location>
</feature>
<feature type="sequence conflict" description="In Ref. 3; AAT99567." evidence="12" ref="3">
    <original>S</original>
    <variation>T</variation>
    <location>
        <position position="771"/>
    </location>
</feature>
<feature type="sequence conflict" description="In Ref. 5; AAA96141." evidence="12" ref="5">
    <original>CTL</original>
    <variation>GTV</variation>
    <location>
        <begin position="852"/>
        <end position="854"/>
    </location>
</feature>
<feature type="sequence conflict" description="In Ref. 1; BAD15356." evidence="12" ref="1">
    <original>G</original>
    <variation>V</variation>
    <location>
        <position position="966"/>
    </location>
</feature>
<feature type="sequence conflict" description="In Ref. 3; AAT99567." evidence="12" ref="3">
    <original>SF</original>
    <variation>FL</variation>
    <location>
        <begin position="997"/>
        <end position="998"/>
    </location>
</feature>